<dbReference type="EMBL" id="CP001298">
    <property type="protein sequence ID" value="ACK81587.1"/>
    <property type="molecule type" value="Genomic_DNA"/>
</dbReference>
<dbReference type="RefSeq" id="WP_012605716.1">
    <property type="nucleotide sequence ID" value="NC_011757.1"/>
</dbReference>
<dbReference type="SMR" id="B7KZ57"/>
<dbReference type="KEGG" id="mch:Mchl_0665"/>
<dbReference type="HOGENOM" id="CLU_077636_0_1_5"/>
<dbReference type="Proteomes" id="UP000002385">
    <property type="component" value="Chromosome"/>
</dbReference>
<dbReference type="GO" id="GO:0005737">
    <property type="term" value="C:cytoplasm"/>
    <property type="evidence" value="ECO:0007669"/>
    <property type="project" value="UniProtKB-SubCell"/>
</dbReference>
<dbReference type="GO" id="GO:0005840">
    <property type="term" value="C:ribosome"/>
    <property type="evidence" value="ECO:0007669"/>
    <property type="project" value="InterPro"/>
</dbReference>
<dbReference type="GO" id="GO:0043022">
    <property type="term" value="F:ribosome binding"/>
    <property type="evidence" value="ECO:0007669"/>
    <property type="project" value="InterPro"/>
</dbReference>
<dbReference type="GO" id="GO:0042274">
    <property type="term" value="P:ribosomal small subunit biogenesis"/>
    <property type="evidence" value="ECO:0007669"/>
    <property type="project" value="UniProtKB-UniRule"/>
</dbReference>
<dbReference type="GO" id="GO:0006364">
    <property type="term" value="P:rRNA processing"/>
    <property type="evidence" value="ECO:0007669"/>
    <property type="project" value="UniProtKB-UniRule"/>
</dbReference>
<dbReference type="Gene3D" id="2.30.30.240">
    <property type="entry name" value="PRC-barrel domain"/>
    <property type="match status" value="1"/>
</dbReference>
<dbReference type="Gene3D" id="2.40.30.60">
    <property type="entry name" value="RimM"/>
    <property type="match status" value="1"/>
</dbReference>
<dbReference type="HAMAP" id="MF_00014">
    <property type="entry name" value="Ribosome_mat_RimM"/>
    <property type="match status" value="1"/>
</dbReference>
<dbReference type="InterPro" id="IPR011033">
    <property type="entry name" value="PRC_barrel-like_sf"/>
</dbReference>
<dbReference type="InterPro" id="IPR056792">
    <property type="entry name" value="PRC_RimM"/>
</dbReference>
<dbReference type="InterPro" id="IPR011961">
    <property type="entry name" value="RimM"/>
</dbReference>
<dbReference type="InterPro" id="IPR002676">
    <property type="entry name" value="RimM_N"/>
</dbReference>
<dbReference type="InterPro" id="IPR036976">
    <property type="entry name" value="RimM_N_sf"/>
</dbReference>
<dbReference type="InterPro" id="IPR009000">
    <property type="entry name" value="Transl_B-barrel_sf"/>
</dbReference>
<dbReference type="NCBIfam" id="TIGR02273">
    <property type="entry name" value="16S_RimM"/>
    <property type="match status" value="1"/>
</dbReference>
<dbReference type="PANTHER" id="PTHR33692">
    <property type="entry name" value="RIBOSOME MATURATION FACTOR RIMM"/>
    <property type="match status" value="1"/>
</dbReference>
<dbReference type="PANTHER" id="PTHR33692:SF1">
    <property type="entry name" value="RIBOSOME MATURATION FACTOR RIMM"/>
    <property type="match status" value="1"/>
</dbReference>
<dbReference type="Pfam" id="PF24986">
    <property type="entry name" value="PRC_RimM"/>
    <property type="match status" value="1"/>
</dbReference>
<dbReference type="Pfam" id="PF01782">
    <property type="entry name" value="RimM"/>
    <property type="match status" value="1"/>
</dbReference>
<dbReference type="SUPFAM" id="SSF50346">
    <property type="entry name" value="PRC-barrel domain"/>
    <property type="match status" value="1"/>
</dbReference>
<dbReference type="SUPFAM" id="SSF50447">
    <property type="entry name" value="Translation proteins"/>
    <property type="match status" value="1"/>
</dbReference>
<sequence length="223" mass="22896">MARRPGSSSRGPARSDRLPTEAVTSARKPHAAAPTPPASPDPGLVLLGEFGRPHGLHGEVRLKSHTSEPLAIAGYGPLHASDGRTLELANVRPAAGSSPDLLIVRVKGVDDRTGAEALNRVTLAIARERLGEVEDEDEFFLTDLIGLTVEDGAGTVIGTIVAVPNFGGGDLLEIRPAAGGPTALLPFTKAFVPSLDIAGGKVVADPPDDLFAPPGPKPADDPG</sequence>
<gene>
    <name evidence="1" type="primary">rimM</name>
    <name type="ordered locus">Mchl_0665</name>
</gene>
<organism>
    <name type="scientific">Methylorubrum extorquens (strain CM4 / NCIMB 13688)</name>
    <name type="common">Methylobacterium extorquens</name>
    <dbReference type="NCBI Taxonomy" id="440085"/>
    <lineage>
        <taxon>Bacteria</taxon>
        <taxon>Pseudomonadati</taxon>
        <taxon>Pseudomonadota</taxon>
        <taxon>Alphaproteobacteria</taxon>
        <taxon>Hyphomicrobiales</taxon>
        <taxon>Methylobacteriaceae</taxon>
        <taxon>Methylorubrum</taxon>
    </lineage>
</organism>
<protein>
    <recommendedName>
        <fullName evidence="1">Ribosome maturation factor RimM</fullName>
    </recommendedName>
</protein>
<accession>B7KZ57</accession>
<feature type="chain" id="PRO_1000116573" description="Ribosome maturation factor RimM">
    <location>
        <begin position="1"/>
        <end position="223"/>
    </location>
</feature>
<feature type="domain" description="PRC barrel" evidence="1">
    <location>
        <begin position="135"/>
        <end position="210"/>
    </location>
</feature>
<feature type="region of interest" description="Disordered" evidence="2">
    <location>
        <begin position="1"/>
        <end position="44"/>
    </location>
</feature>
<feature type="region of interest" description="Disordered" evidence="2">
    <location>
        <begin position="203"/>
        <end position="223"/>
    </location>
</feature>
<feature type="compositionally biased region" description="Low complexity" evidence="2">
    <location>
        <begin position="1"/>
        <end position="12"/>
    </location>
</feature>
<keyword id="KW-0143">Chaperone</keyword>
<keyword id="KW-0963">Cytoplasm</keyword>
<keyword id="KW-0690">Ribosome biogenesis</keyword>
<keyword id="KW-0698">rRNA processing</keyword>
<evidence type="ECO:0000255" key="1">
    <source>
        <dbReference type="HAMAP-Rule" id="MF_00014"/>
    </source>
</evidence>
<evidence type="ECO:0000256" key="2">
    <source>
        <dbReference type="SAM" id="MobiDB-lite"/>
    </source>
</evidence>
<proteinExistence type="inferred from homology"/>
<comment type="function">
    <text evidence="1">An accessory protein needed during the final step in the assembly of 30S ribosomal subunit, possibly for assembly of the head region. Essential for efficient processing of 16S rRNA. May be needed both before and after RbfA during the maturation of 16S rRNA. It has affinity for free ribosomal 30S subunits but not for 70S ribosomes.</text>
</comment>
<comment type="subunit">
    <text evidence="1">Binds ribosomal protein uS19.</text>
</comment>
<comment type="subcellular location">
    <subcellularLocation>
        <location evidence="1">Cytoplasm</location>
    </subcellularLocation>
</comment>
<comment type="domain">
    <text evidence="1">The PRC barrel domain binds ribosomal protein uS19.</text>
</comment>
<comment type="similarity">
    <text evidence="1">Belongs to the RimM family.</text>
</comment>
<name>RIMM_METC4</name>
<reference key="1">
    <citation type="submission" date="2008-12" db="EMBL/GenBank/DDBJ databases">
        <title>Complete sequence of chromosome of Methylobacterium chloromethanicum CM4.</title>
        <authorList>
            <consortium name="US DOE Joint Genome Institute"/>
            <person name="Lucas S."/>
            <person name="Copeland A."/>
            <person name="Lapidus A."/>
            <person name="Glavina del Rio T."/>
            <person name="Dalin E."/>
            <person name="Tice H."/>
            <person name="Bruce D."/>
            <person name="Goodwin L."/>
            <person name="Pitluck S."/>
            <person name="Chertkov O."/>
            <person name="Brettin T."/>
            <person name="Detter J.C."/>
            <person name="Han C."/>
            <person name="Larimer F."/>
            <person name="Land M."/>
            <person name="Hauser L."/>
            <person name="Kyrpides N."/>
            <person name="Mikhailova N."/>
            <person name="Marx C."/>
            <person name="Richardson P."/>
        </authorList>
    </citation>
    <scope>NUCLEOTIDE SEQUENCE [LARGE SCALE GENOMIC DNA]</scope>
    <source>
        <strain>CM4 / NCIMB 13688</strain>
    </source>
</reference>